<keyword id="KW-0007">Acetylation</keyword>
<keyword id="KW-1003">Cell membrane</keyword>
<keyword id="KW-0966">Cell projection</keyword>
<keyword id="KW-0137">Centromere</keyword>
<keyword id="KW-0158">Chromosome</keyword>
<keyword id="KW-0159">Chromosome partition</keyword>
<keyword id="KW-0963">Cytoplasm</keyword>
<keyword id="KW-0472">Membrane</keyword>
<keyword id="KW-0539">Nucleus</keyword>
<keyword id="KW-1185">Reference proteome</keyword>
<keyword id="KW-0677">Repeat</keyword>
<name>2AAA_PIG</name>
<organism>
    <name type="scientific">Sus scrofa</name>
    <name type="common">Pig</name>
    <dbReference type="NCBI Taxonomy" id="9823"/>
    <lineage>
        <taxon>Eukaryota</taxon>
        <taxon>Metazoa</taxon>
        <taxon>Chordata</taxon>
        <taxon>Craniata</taxon>
        <taxon>Vertebrata</taxon>
        <taxon>Euteleostomi</taxon>
        <taxon>Mammalia</taxon>
        <taxon>Eutheria</taxon>
        <taxon>Laurasiatheria</taxon>
        <taxon>Artiodactyla</taxon>
        <taxon>Suina</taxon>
        <taxon>Suidae</taxon>
        <taxon>Sus</taxon>
    </lineage>
</organism>
<sequence>MAAADGDDSLYPIAVLIDELRNEDVQLRLNSIKKLSTIALALGVERTRSELLPFLTDTIYDEDEVLLALAEQLGTFTTLVGGPEYVHCLLPPLESLATVEETVVRDKAVESLRAISHEHSPSDLEAHFVPLVKRLAGGDWFTSRTSACGLFSVCYPRVSSAVKAELRQYFRNLCSDDTPMVRRAAASKLGEFAKVLELDNVKSEIIPMFSNLASDEQDSVRLLAVEACVNIAQLLPQEDLEALVMPTLRQAAEDKSWRVRYMVADKFTELQKAVGPEITKTDLVPAFQNLMKDCEAEVRAAASHKVKEFCENLSADCRENVIMTQILPCIKELVSDANQHVKSALASVIMGLSPILGKDNTIEHLLPLFLAQLKDECPEVRLNIISNLDCVNEVIGIRQLSQSLLPAIVELAEDAKWRVRLAIIEYMPLLAGQLGVEFFDEKLNSLCMAWLVDHVYAIREAATSNLKKLVEKFGKEWAHATIIPKVLAMSGDPNYLHRMTTLFCINVLSEVCGQDITTKHMLPTVLRMAGDPVANVRFNVAKSLQKIGPILDNSTLQSEVKPILEKLTQDQDVDVKYFAQEALTVLSLA</sequence>
<comment type="function">
    <text evidence="1 3">The PR65 subunit of protein phosphatase 2A serves as a scaffolding molecule to coordinate the assembly of the catalytic subunit and a variable regulatory B subunit. Upon interaction with GNA12 promotes dephosphorylation of microtubule associated protein TAU/MAPT. Required for proper chromosome segregation and for centromeric localization of SGO1 in mitosis (By similarity). Together with RACK1 adapter, mediates dephosphorylation of AKT1 at 'Ser-473', preventing AKT1 activation and AKT-mTOR signaling pathway (By similarity). Dephosphorylation of AKT1 is essential for regulatory T-cells (Treg) homeostasis and stability (By similarity). Part of the striatin-interacting phosphatase and kinase (STRIPAK) complexes. STRIPAK complexes have critical roles in protein (de)phosphorylation and are regulators of multiple signaling pathways including Hippo, MAPK, nuclear receptor and cytoskeleton remodeling. Different types of STRIPAK complexes are involved in a variety of biological processes such as cell growth, differentiation, apoptosis, metabolism and immune regulation (By similarity). Key mediator of a quality checkpoint during transcription elongation as part of the Integrator-PP2A (INTAC) complex (By similarity). The INTAC complex drives premature transcription termination of transcripts that are unfavorably configured for transcriptional elongation: within the INTAC complex, acts as a scaffolding subunit for PPP2CA, which catalyzes dephosphorylation of the C-terminal domain (CTD) of Pol II subunit POLR2A/RPB1 and SUPT5H/SPT5, thereby preventing transcriptional elongation (By similarity). Regulates the recruitment of the SKA complex to kinetochores (By similarity).</text>
</comment>
<comment type="subunit">
    <text evidence="1 2 3">PP2A consists of a common heterodimeric core enzyme, composed of PPP2CA a 36 kDa catalytic subunit (subunit C) and PPP2R1A a 65 kDa constant regulatory subunit (PR65 or subunit A), that associates with a variety of regulatory subunits (By similarity). Proteins that associate with the core dimer include three families of regulatory subunits B (the R2/B/PR55/B55, R3/B''/PR72/PR130/PR59 and R5/B'/B56 families), the 48 kDa variable regulatory subunit, viral proteins, and cell signaling molecules (By similarity). Found in a complex with at least ARL2, PPP2CB, PPP2R1A, PPP2R2A, PPP2R5E and TBCD (By similarity). Interacts with the PP2A C catalytic subunit PPP2CA. Interacts with the PP2A B subunit PPP2R2A (By similarity). Interacts with the PP2A B subunit PPP2R5D (By similarity). Interacts with FOXO1; the interaction dephosphorylates FOXO1 on AKT-mediated phosphorylation sites (By similarity). Interacts with IPO9. Interacts with TP53 and SGO1. Interacts with PLA2G16; this interaction might decrease PP2A activity. Interacts with CTTNBP2NL. Interacts with GNA12; the interaction promotes protein phosphatase 2A activation causing dephosphorylation of MAPT. Interacts with CIP2A; this interaction stabilizes CIP2A. Interacts with PABIR1/FAM122A (By similarity). Interacts with ADCY8; antagonizes interaction between ADCY8 and calmodulin (By similarity). Interacts with CRTC3 (when phosphorylated at 'Ser-391'). Interacts with SPRY2 (By similarity). Part of the core of STRIPAK complexes composed of PP2A catalytic and scaffolding subunits, the striatins (PP2A regulatory subunits), the striatin-associated proteins MOB4, STRIP1 and STRIP2, PDCD10 and members of the STE20 kinases, such as STK24 and STK26 (By similarity). Component of the Integrator-PP2A (INTAC) complex, composed of the Integrator core complex and protein phosphatase 2A subunits PPP2CA and PPP2R1A (By similarity).</text>
</comment>
<comment type="subcellular location">
    <subcellularLocation>
        <location evidence="2">Cytoplasm</location>
    </subcellularLocation>
    <subcellularLocation>
        <location evidence="1">Nucleus</location>
    </subcellularLocation>
    <subcellularLocation>
        <location evidence="1">Chromosome</location>
    </subcellularLocation>
    <subcellularLocation>
        <location evidence="1">Chromosome</location>
        <location evidence="1">Centromere</location>
    </subcellularLocation>
    <subcellularLocation>
        <location evidence="1">Lateral cell membrane</location>
    </subcellularLocation>
    <subcellularLocation>
        <location evidence="1">Cell projection</location>
        <location evidence="1">Dendrite</location>
    </subcellularLocation>
    <text evidence="1">Centromeric localization requires the presence of BUB1. Recruited to chromatin and transcription pause-release checkpoint via its association with the Integrator complex.</text>
</comment>
<comment type="domain">
    <text>Each HEAT repeat appears to consist of two alpha helices joined by a hydrophilic region, the intrarepeat loop. The repeat units may be arranged laterally to form a rod-like structure.</text>
</comment>
<comment type="similarity">
    <text evidence="4">Belongs to the phosphatase 2A regulatory subunit A family.</text>
</comment>
<accession>P54612</accession>
<feature type="initiator methionine" description="Removed" evidence="1">
    <location>
        <position position="1"/>
    </location>
</feature>
<feature type="chain" id="PRO_0000071402" description="Serine/threonine-protein phosphatase 2A 65 kDa regulatory subunit A alpha isoform">
    <location>
        <begin position="2"/>
        <end position="589"/>
    </location>
</feature>
<feature type="repeat" description="HEAT 1" evidence="1">
    <location>
        <begin position="8"/>
        <end position="46"/>
    </location>
</feature>
<feature type="repeat" description="HEAT 2" evidence="1">
    <location>
        <begin position="47"/>
        <end position="84"/>
    </location>
</feature>
<feature type="repeat" description="HEAT 3" evidence="1">
    <location>
        <begin position="85"/>
        <end position="123"/>
    </location>
</feature>
<feature type="repeat" description="HEAT 4" evidence="1">
    <location>
        <begin position="124"/>
        <end position="161"/>
    </location>
</feature>
<feature type="repeat" description="HEAT 5" evidence="1">
    <location>
        <begin position="162"/>
        <end position="200"/>
    </location>
</feature>
<feature type="repeat" description="HEAT 6" evidence="1">
    <location>
        <begin position="201"/>
        <end position="239"/>
    </location>
</feature>
<feature type="repeat" description="HEAT 7" evidence="1">
    <location>
        <begin position="240"/>
        <end position="278"/>
    </location>
</feature>
<feature type="repeat" description="HEAT 8" evidence="1">
    <location>
        <begin position="279"/>
        <end position="321"/>
    </location>
</feature>
<feature type="repeat" description="HEAT 9" evidence="1">
    <location>
        <begin position="322"/>
        <end position="360"/>
    </location>
</feature>
<feature type="repeat" description="HEAT 10" evidence="1">
    <location>
        <begin position="361"/>
        <end position="399"/>
    </location>
</feature>
<feature type="repeat" description="HEAT 11" evidence="1">
    <location>
        <begin position="400"/>
        <end position="438"/>
    </location>
</feature>
<feature type="repeat" description="HEAT 12" evidence="1">
    <location>
        <begin position="439"/>
        <end position="477"/>
    </location>
</feature>
<feature type="repeat" description="HEAT 13" evidence="1">
    <location>
        <begin position="478"/>
        <end position="516"/>
    </location>
</feature>
<feature type="repeat" description="HEAT 14" evidence="1">
    <location>
        <begin position="517"/>
        <end position="555"/>
    </location>
</feature>
<feature type="repeat" description="HEAT 15" evidence="1">
    <location>
        <begin position="556"/>
        <end position="589"/>
    </location>
</feature>
<feature type="modified residue" description="N-acetylalanine" evidence="1">
    <location>
        <position position="2"/>
    </location>
</feature>
<feature type="modified residue" description="N6-acetyllysine" evidence="1">
    <location>
        <position position="280"/>
    </location>
</feature>
<gene>
    <name type="primary">PPP2R1A</name>
</gene>
<dbReference type="EMBL" id="Z34955">
    <property type="protein sequence ID" value="CAA84414.1"/>
    <property type="molecule type" value="mRNA"/>
</dbReference>
<dbReference type="RefSeq" id="NP_999189.1">
    <property type="nucleotide sequence ID" value="NM_214024.1"/>
</dbReference>
<dbReference type="SMR" id="P54612"/>
<dbReference type="CORUM" id="P54612"/>
<dbReference type="FunCoup" id="P54612">
    <property type="interactions" value="1928"/>
</dbReference>
<dbReference type="PaxDb" id="9823-ENSSSCP00000024131"/>
<dbReference type="PeptideAtlas" id="P54612"/>
<dbReference type="Ensembl" id="ENSSSCT00040030126.1">
    <property type="protein sequence ID" value="ENSSSCP00040012577.1"/>
    <property type="gene ID" value="ENSSSCG00040022372.1"/>
</dbReference>
<dbReference type="Ensembl" id="ENSSSCT00070033438.1">
    <property type="protein sequence ID" value="ENSSSCP00070027938.1"/>
    <property type="gene ID" value="ENSSSCG00070016930.1"/>
</dbReference>
<dbReference type="GeneID" id="397088"/>
<dbReference type="KEGG" id="ssc:397088"/>
<dbReference type="CTD" id="5518"/>
<dbReference type="eggNOG" id="KOG0211">
    <property type="taxonomic scope" value="Eukaryota"/>
</dbReference>
<dbReference type="HOGENOM" id="CLU_015533_2_1_1"/>
<dbReference type="InParanoid" id="P54612"/>
<dbReference type="OMA" id="NTLCMTW"/>
<dbReference type="OrthoDB" id="340346at2759"/>
<dbReference type="TreeFam" id="TF105552"/>
<dbReference type="Reactome" id="R-SSC-113501">
    <property type="pathway name" value="Inhibition of replication initiation of damaged DNA by RB1/E2F1"/>
</dbReference>
<dbReference type="Reactome" id="R-SSC-1295596">
    <property type="pathway name" value="Spry regulation of FGF signaling"/>
</dbReference>
<dbReference type="Reactome" id="R-SSC-141444">
    <property type="pathway name" value="Amplification of signal from unattached kinetochores via a MAD2 inhibitory signal"/>
</dbReference>
<dbReference type="Reactome" id="R-SSC-180024">
    <property type="pathway name" value="DARPP-32 events"/>
</dbReference>
<dbReference type="Reactome" id="R-SSC-195253">
    <property type="pathway name" value="Degradation of beta-catenin by the destruction complex"/>
</dbReference>
<dbReference type="Reactome" id="R-SSC-196299">
    <property type="pathway name" value="Beta-catenin phosphorylation cascade"/>
</dbReference>
<dbReference type="Reactome" id="R-SSC-198753">
    <property type="pathway name" value="ERK/MAPK targets"/>
</dbReference>
<dbReference type="Reactome" id="R-SSC-202670">
    <property type="pathway name" value="ERKs are inactivated"/>
</dbReference>
<dbReference type="Reactome" id="R-SSC-2467813">
    <property type="pathway name" value="Separation of Sister Chromatids"/>
</dbReference>
<dbReference type="Reactome" id="R-SSC-2500257">
    <property type="pathway name" value="Resolution of Sister Chromatid Cohesion"/>
</dbReference>
<dbReference type="Reactome" id="R-SSC-2565942">
    <property type="pathway name" value="Regulation of PLK1 Activity at G2/M Transition"/>
</dbReference>
<dbReference type="Reactome" id="R-SSC-2995383">
    <property type="pathway name" value="Initiation of Nuclear Envelope (NE) Reformation"/>
</dbReference>
<dbReference type="Reactome" id="R-SSC-380259">
    <property type="pathway name" value="Loss of Nlp from mitotic centrosomes"/>
</dbReference>
<dbReference type="Reactome" id="R-SSC-380270">
    <property type="pathway name" value="Recruitment of mitotic centrosome proteins and complexes"/>
</dbReference>
<dbReference type="Reactome" id="R-SSC-380284">
    <property type="pathway name" value="Loss of proteins required for interphase microtubule organization from the centrosome"/>
</dbReference>
<dbReference type="Reactome" id="R-SSC-380320">
    <property type="pathway name" value="Recruitment of NuMA to mitotic centrosomes"/>
</dbReference>
<dbReference type="Reactome" id="R-SSC-389356">
    <property type="pathway name" value="Co-stimulation by CD28"/>
</dbReference>
<dbReference type="Reactome" id="R-SSC-389513">
    <property type="pathway name" value="Co-inhibition by CTLA4"/>
</dbReference>
<dbReference type="Reactome" id="R-SSC-432142">
    <property type="pathway name" value="Platelet sensitization by LDL"/>
</dbReference>
<dbReference type="Reactome" id="R-SSC-4641262">
    <property type="pathway name" value="Disassembly of the destruction complex and recruitment of AXIN to the membrane"/>
</dbReference>
<dbReference type="Reactome" id="R-SSC-5620912">
    <property type="pathway name" value="Anchoring of the basal body to the plasma membrane"/>
</dbReference>
<dbReference type="Reactome" id="R-SSC-5663220">
    <property type="pathway name" value="RHO GTPases Activate Formins"/>
</dbReference>
<dbReference type="Reactome" id="R-SSC-5673000">
    <property type="pathway name" value="RAF activation"/>
</dbReference>
<dbReference type="Reactome" id="R-SSC-5675221">
    <property type="pathway name" value="Negative regulation of MAPK pathway"/>
</dbReference>
<dbReference type="Reactome" id="R-SSC-6804757">
    <property type="pathway name" value="Regulation of TP53 Degradation"/>
</dbReference>
<dbReference type="Reactome" id="R-SSC-6811558">
    <property type="pathway name" value="PI5P, PP2A and IER3 Regulate PI3K/AKT Signaling"/>
</dbReference>
<dbReference type="Reactome" id="R-SSC-68877">
    <property type="pathway name" value="Mitotic Prometaphase"/>
</dbReference>
<dbReference type="Reactome" id="R-SSC-69231">
    <property type="pathway name" value="Cyclin D associated events in G1"/>
</dbReference>
<dbReference type="Reactome" id="R-SSC-69273">
    <property type="pathway name" value="Cyclin A/B1/B2 associated events during G2/M transition"/>
</dbReference>
<dbReference type="Reactome" id="R-SSC-8854518">
    <property type="pathway name" value="AURKA Activation by TPX2"/>
</dbReference>
<dbReference type="Reactome" id="R-SSC-9648025">
    <property type="pathway name" value="EML4 and NUDC in mitotic spindle formation"/>
</dbReference>
<dbReference type="Reactome" id="R-SSC-975957">
    <property type="pathway name" value="Nonsense Mediated Decay (NMD) enhanced by the Exon Junction Complex (EJC)"/>
</dbReference>
<dbReference type="Reactome" id="R-SSC-9833482">
    <property type="pathway name" value="PKR-mediated signaling"/>
</dbReference>
<dbReference type="Reactome" id="R-SSC-9860927">
    <property type="pathway name" value="Turbulent (oscillatory, disturbed) flow shear stress activates signaling by PIEZO1 and integrins in endothelial cells"/>
</dbReference>
<dbReference type="Proteomes" id="UP000008227">
    <property type="component" value="Unplaced"/>
</dbReference>
<dbReference type="Proteomes" id="UP000314985">
    <property type="component" value="Unassembled WGS sequence"/>
</dbReference>
<dbReference type="Proteomes" id="UP000694570">
    <property type="component" value="Unplaced"/>
</dbReference>
<dbReference type="Proteomes" id="UP000694571">
    <property type="component" value="Unplaced"/>
</dbReference>
<dbReference type="Proteomes" id="UP000694720">
    <property type="component" value="Unplaced"/>
</dbReference>
<dbReference type="Proteomes" id="UP000694722">
    <property type="component" value="Unplaced"/>
</dbReference>
<dbReference type="Proteomes" id="UP000694723">
    <property type="component" value="Unplaced"/>
</dbReference>
<dbReference type="Proteomes" id="UP000694724">
    <property type="component" value="Unplaced"/>
</dbReference>
<dbReference type="Proteomes" id="UP000694725">
    <property type="component" value="Unplaced"/>
</dbReference>
<dbReference type="Proteomes" id="UP000694726">
    <property type="component" value="Unplaced"/>
</dbReference>
<dbReference type="Proteomes" id="UP000694727">
    <property type="component" value="Unplaced"/>
</dbReference>
<dbReference type="Proteomes" id="UP000694728">
    <property type="component" value="Unplaced"/>
</dbReference>
<dbReference type="GO" id="GO:0000785">
    <property type="term" value="C:chromatin"/>
    <property type="evidence" value="ECO:0000250"/>
    <property type="project" value="UniProtKB"/>
</dbReference>
<dbReference type="GO" id="GO:0000775">
    <property type="term" value="C:chromosome, centromeric region"/>
    <property type="evidence" value="ECO:0000250"/>
    <property type="project" value="UniProtKB"/>
</dbReference>
<dbReference type="GO" id="GO:0005737">
    <property type="term" value="C:cytoplasm"/>
    <property type="evidence" value="ECO:0000318"/>
    <property type="project" value="GO_Central"/>
</dbReference>
<dbReference type="GO" id="GO:0005829">
    <property type="term" value="C:cytosol"/>
    <property type="evidence" value="ECO:0000318"/>
    <property type="project" value="GO_Central"/>
</dbReference>
<dbReference type="GO" id="GO:0030425">
    <property type="term" value="C:dendrite"/>
    <property type="evidence" value="ECO:0007669"/>
    <property type="project" value="UniProtKB-SubCell"/>
</dbReference>
<dbReference type="GO" id="GO:0090443">
    <property type="term" value="C:FAR/SIN/STRIPAK complex"/>
    <property type="evidence" value="ECO:0000250"/>
    <property type="project" value="UniProtKB"/>
</dbReference>
<dbReference type="GO" id="GO:0016328">
    <property type="term" value="C:lateral plasma membrane"/>
    <property type="evidence" value="ECO:0007669"/>
    <property type="project" value="UniProtKB-SubCell"/>
</dbReference>
<dbReference type="GO" id="GO:0005634">
    <property type="term" value="C:nucleus"/>
    <property type="evidence" value="ECO:0000250"/>
    <property type="project" value="UniProtKB"/>
</dbReference>
<dbReference type="GO" id="GO:0000159">
    <property type="term" value="C:protein phosphatase type 2A complex"/>
    <property type="evidence" value="ECO:0000318"/>
    <property type="project" value="GO_Central"/>
</dbReference>
<dbReference type="GO" id="GO:0019888">
    <property type="term" value="F:protein phosphatase regulator activity"/>
    <property type="evidence" value="ECO:0000250"/>
    <property type="project" value="UniProtKB"/>
</dbReference>
<dbReference type="GO" id="GO:0007059">
    <property type="term" value="P:chromosome segregation"/>
    <property type="evidence" value="ECO:0000250"/>
    <property type="project" value="UniProtKB"/>
</dbReference>
<dbReference type="GO" id="GO:0051754">
    <property type="term" value="P:meiotic sister chromatid cohesion, centromeric"/>
    <property type="evidence" value="ECO:0000318"/>
    <property type="project" value="GO_Central"/>
</dbReference>
<dbReference type="GO" id="GO:0035331">
    <property type="term" value="P:negative regulation of hippo signaling"/>
    <property type="evidence" value="ECO:0000250"/>
    <property type="project" value="UniProtKB"/>
</dbReference>
<dbReference type="GO" id="GO:0051898">
    <property type="term" value="P:negative regulation of phosphatidylinositol 3-kinase/protein kinase B signal transduction"/>
    <property type="evidence" value="ECO:0000250"/>
    <property type="project" value="UniProtKB"/>
</dbReference>
<dbReference type="GO" id="GO:0051225">
    <property type="term" value="P:spindle assembly"/>
    <property type="evidence" value="ECO:0000318"/>
    <property type="project" value="GO_Central"/>
</dbReference>
<dbReference type="GO" id="GO:0043029">
    <property type="term" value="P:T cell homeostasis"/>
    <property type="evidence" value="ECO:0000250"/>
    <property type="project" value="UniProtKB"/>
</dbReference>
<dbReference type="FunFam" id="1.25.10.10:FF:000011">
    <property type="entry name" value="Serine/threonine-protein phosphatase 2A regulatory subunit A alpha isoform"/>
    <property type="match status" value="1"/>
</dbReference>
<dbReference type="Gene3D" id="1.25.10.10">
    <property type="entry name" value="Leucine-rich Repeat Variant"/>
    <property type="match status" value="1"/>
</dbReference>
<dbReference type="InterPro" id="IPR011989">
    <property type="entry name" value="ARM-like"/>
</dbReference>
<dbReference type="InterPro" id="IPR016024">
    <property type="entry name" value="ARM-type_fold"/>
</dbReference>
<dbReference type="InterPro" id="IPR000357">
    <property type="entry name" value="HEAT"/>
</dbReference>
<dbReference type="InterPro" id="IPR021133">
    <property type="entry name" value="HEAT_type_2"/>
</dbReference>
<dbReference type="InterPro" id="IPR054573">
    <property type="entry name" value="PP2A/SF3B1-like_HEAT"/>
</dbReference>
<dbReference type="InterPro" id="IPR051023">
    <property type="entry name" value="PP2A_Regulatory_Subunit_A"/>
</dbReference>
<dbReference type="PANTHER" id="PTHR10648">
    <property type="entry name" value="SERINE/THREONINE-PROTEIN PHOSPHATASE PP2A 65 KDA REGULATORY SUBUNIT"/>
    <property type="match status" value="1"/>
</dbReference>
<dbReference type="PANTHER" id="PTHR10648:SF2">
    <property type="entry name" value="SERINE_THREONINE-PROTEIN PHOSPHATASE 2A 65 KDA REGULATORY SUBUNIT A ALPHA ISOFORM"/>
    <property type="match status" value="1"/>
</dbReference>
<dbReference type="Pfam" id="PF02985">
    <property type="entry name" value="HEAT"/>
    <property type="match status" value="4"/>
</dbReference>
<dbReference type="Pfam" id="PF13646">
    <property type="entry name" value="HEAT_2"/>
    <property type="match status" value="1"/>
</dbReference>
<dbReference type="Pfam" id="PF22646">
    <property type="entry name" value="PPP2R1A-like_HEAT"/>
    <property type="match status" value="1"/>
</dbReference>
<dbReference type="SUPFAM" id="SSF48371">
    <property type="entry name" value="ARM repeat"/>
    <property type="match status" value="1"/>
</dbReference>
<dbReference type="PROSITE" id="PS50077">
    <property type="entry name" value="HEAT_REPEAT"/>
    <property type="match status" value="11"/>
</dbReference>
<reference key="1">
    <citation type="thesis" date="1992" institute="Friedrich Miescher Institut / Basel" country="Switzerland">
        <authorList>
            <person name="Mayer-Jaekel R.E."/>
        </authorList>
    </citation>
    <scope>NUCLEOTIDE SEQUENCE [MRNA]</scope>
</reference>
<proteinExistence type="evidence at transcript level"/>
<evidence type="ECO:0000250" key="1">
    <source>
        <dbReference type="UniProtKB" id="P30153"/>
    </source>
</evidence>
<evidence type="ECO:0000250" key="2">
    <source>
        <dbReference type="UniProtKB" id="Q32PI5"/>
    </source>
</evidence>
<evidence type="ECO:0000250" key="3">
    <source>
        <dbReference type="UniProtKB" id="Q76MZ3"/>
    </source>
</evidence>
<evidence type="ECO:0000305" key="4"/>
<protein>
    <recommendedName>
        <fullName>Serine/threonine-protein phosphatase 2A 65 kDa regulatory subunit A alpha isoform</fullName>
        <shortName evidence="1">PP2Aa</shortName>
    </recommendedName>
    <alternativeName>
        <fullName>PP2A subunit A isoform PR65-alpha</fullName>
    </alternativeName>
    <alternativeName>
        <fullName>PP2A subunit A isoform R1-alpha</fullName>
    </alternativeName>
</protein>